<name>RF2_STAAC</name>
<feature type="chain" id="PRO_0000166845" description="Peptide chain release factor 2">
    <location>
        <begin position="1"/>
        <end position="369"/>
    </location>
</feature>
<feature type="modified residue" description="N5-methylglutamine" evidence="2">
    <location>
        <position position="252"/>
    </location>
</feature>
<comment type="function">
    <text evidence="2">Peptide chain release factor 2 directs the termination of translation in response to the peptide chain termination codons UGA and UAA.</text>
</comment>
<comment type="subcellular location">
    <subcellularLocation>
        <location evidence="2">Cytoplasm</location>
    </subcellularLocation>
</comment>
<comment type="PTM">
    <text evidence="2">Methylated by PrmC. Methylation increases the termination efficiency of RF2.</text>
</comment>
<comment type="miscellaneous">
    <text evidence="1">The gene for this protein contains a UGA in-frame termination codon after Leu-24; a naturally occurring frameshift enables complete translation of RF-2. This provides a mechanism for the protein to regulate its own production (By similarity).</text>
</comment>
<comment type="similarity">
    <text evidence="2">Belongs to the prokaryotic/mitochondrial release factor family.</text>
</comment>
<organism>
    <name type="scientific">Staphylococcus aureus (strain COL)</name>
    <dbReference type="NCBI Taxonomy" id="93062"/>
    <lineage>
        <taxon>Bacteria</taxon>
        <taxon>Bacillati</taxon>
        <taxon>Bacillota</taxon>
        <taxon>Bacilli</taxon>
        <taxon>Bacillales</taxon>
        <taxon>Staphylococcaceae</taxon>
        <taxon>Staphylococcus</taxon>
    </lineage>
</organism>
<gene>
    <name evidence="2" type="primary">prfB</name>
    <name type="ordered locus">SACOL0818</name>
</gene>
<proteinExistence type="inferred from homology"/>
<protein>
    <recommendedName>
        <fullName evidence="2">Peptide chain release factor 2</fullName>
        <shortName evidence="2">RF-2</shortName>
    </recommendedName>
</protein>
<keyword id="KW-0963">Cytoplasm</keyword>
<keyword id="KW-0488">Methylation</keyword>
<keyword id="KW-0648">Protein biosynthesis</keyword>
<keyword id="KW-0688">Ribosomal frameshifting</keyword>
<accession>Q5HHR5</accession>
<reference key="1">
    <citation type="journal article" date="2005" name="J. Bacteriol.">
        <title>Insights on evolution of virulence and resistance from the complete genome analysis of an early methicillin-resistant Staphylococcus aureus strain and a biofilm-producing methicillin-resistant Staphylococcus epidermidis strain.</title>
        <authorList>
            <person name="Gill S.R."/>
            <person name="Fouts D.E."/>
            <person name="Archer G.L."/>
            <person name="Mongodin E.F."/>
            <person name="DeBoy R.T."/>
            <person name="Ravel J."/>
            <person name="Paulsen I.T."/>
            <person name="Kolonay J.F."/>
            <person name="Brinkac L.M."/>
            <person name="Beanan M.J."/>
            <person name="Dodson R.J."/>
            <person name="Daugherty S.C."/>
            <person name="Madupu R."/>
            <person name="Angiuoli S.V."/>
            <person name="Durkin A.S."/>
            <person name="Haft D.H."/>
            <person name="Vamathevan J.J."/>
            <person name="Khouri H."/>
            <person name="Utterback T.R."/>
            <person name="Lee C."/>
            <person name="Dimitrov G."/>
            <person name="Jiang L."/>
            <person name="Qin H."/>
            <person name="Weidman J."/>
            <person name="Tran K."/>
            <person name="Kang K.H."/>
            <person name="Hance I.R."/>
            <person name="Nelson K.E."/>
            <person name="Fraser C.M."/>
        </authorList>
    </citation>
    <scope>NUCLEOTIDE SEQUENCE [LARGE SCALE GENOMIC DNA]</scope>
    <source>
        <strain>COL</strain>
    </source>
</reference>
<sequence>MELSEIKRNIDKYNQDLTQIRGSLDLENKETNIQEYEEMMAEPNFWDNQTKAQDIIDKNNALKAIVNGYKTLQAEVDDMDATWDLLQEEFDEEMKEDLEQEVINFKAKVDEYELQLLLDGPHDANNAILELHPGAGGTESQDWANMLFRMYQRYCEKKGFKVETVDYLPGDEAGIKSVTLLIKGHNAYGYLKAEKGVHRLVRISPFDSSGRRHTSFASCDVIPDFNNDEIEIEINPDDITVDTFRASGAGGQHINKTESAIRITHHPSGIVVNNQNERSQIKNREAAMKMLKSKLYQLKLEEQAREMAEIRGEQKEIGWGSQIRSYVFHPYSMVKDHRTNEETGKVDAVMDGDIGPFIESYLRQTMSHD</sequence>
<dbReference type="EMBL" id="CP000046">
    <property type="protein sequence ID" value="AAW36374.1"/>
    <property type="molecule type" value="Genomic_DNA"/>
</dbReference>
<dbReference type="SMR" id="Q5HHR5"/>
<dbReference type="KEGG" id="sac:SACOL0818"/>
<dbReference type="HOGENOM" id="CLU_221244_2_2_9"/>
<dbReference type="Proteomes" id="UP000000530">
    <property type="component" value="Chromosome"/>
</dbReference>
<dbReference type="GO" id="GO:0005737">
    <property type="term" value="C:cytoplasm"/>
    <property type="evidence" value="ECO:0007669"/>
    <property type="project" value="UniProtKB-SubCell"/>
</dbReference>
<dbReference type="GO" id="GO:0016149">
    <property type="term" value="F:translation release factor activity, codon specific"/>
    <property type="evidence" value="ECO:0007669"/>
    <property type="project" value="UniProtKB-UniRule"/>
</dbReference>
<dbReference type="GO" id="GO:0075523">
    <property type="term" value="P:viral translational frameshifting"/>
    <property type="evidence" value="ECO:0007669"/>
    <property type="project" value="UniProtKB-KW"/>
</dbReference>
<dbReference type="FunFam" id="3.30.160.20:FF:000010">
    <property type="entry name" value="Peptide chain release factor 2"/>
    <property type="match status" value="1"/>
</dbReference>
<dbReference type="Gene3D" id="3.30.160.20">
    <property type="match status" value="1"/>
</dbReference>
<dbReference type="Gene3D" id="3.30.70.1660">
    <property type="match status" value="1"/>
</dbReference>
<dbReference type="Gene3D" id="1.20.58.410">
    <property type="entry name" value="Release factor"/>
    <property type="match status" value="1"/>
</dbReference>
<dbReference type="HAMAP" id="MF_00094">
    <property type="entry name" value="Rel_fac_2"/>
    <property type="match status" value="1"/>
</dbReference>
<dbReference type="InterPro" id="IPR005139">
    <property type="entry name" value="PCRF"/>
</dbReference>
<dbReference type="InterPro" id="IPR000352">
    <property type="entry name" value="Pep_chain_release_fac_I"/>
</dbReference>
<dbReference type="InterPro" id="IPR045853">
    <property type="entry name" value="Pep_chain_release_fac_I_sf"/>
</dbReference>
<dbReference type="InterPro" id="IPR004374">
    <property type="entry name" value="PrfB"/>
</dbReference>
<dbReference type="NCBIfam" id="TIGR00020">
    <property type="entry name" value="prfB"/>
    <property type="match status" value="1"/>
</dbReference>
<dbReference type="PANTHER" id="PTHR43116:SF3">
    <property type="entry name" value="CLASS I PEPTIDE CHAIN RELEASE FACTOR"/>
    <property type="match status" value="1"/>
</dbReference>
<dbReference type="PANTHER" id="PTHR43116">
    <property type="entry name" value="PEPTIDE CHAIN RELEASE FACTOR 2"/>
    <property type="match status" value="1"/>
</dbReference>
<dbReference type="Pfam" id="PF03462">
    <property type="entry name" value="PCRF"/>
    <property type="match status" value="1"/>
</dbReference>
<dbReference type="Pfam" id="PF00472">
    <property type="entry name" value="RF-1"/>
    <property type="match status" value="1"/>
</dbReference>
<dbReference type="SMART" id="SM00937">
    <property type="entry name" value="PCRF"/>
    <property type="match status" value="1"/>
</dbReference>
<dbReference type="SUPFAM" id="SSF75620">
    <property type="entry name" value="Release factor"/>
    <property type="match status" value="1"/>
</dbReference>
<dbReference type="PROSITE" id="PS00745">
    <property type="entry name" value="RF_PROK_I"/>
    <property type="match status" value="1"/>
</dbReference>
<evidence type="ECO:0000250" key="1"/>
<evidence type="ECO:0000255" key="2">
    <source>
        <dbReference type="HAMAP-Rule" id="MF_00094"/>
    </source>
</evidence>